<evidence type="ECO:0000255" key="1">
    <source>
        <dbReference type="HAMAP-Rule" id="MF_04065"/>
    </source>
</evidence>
<evidence type="ECO:0000256" key="2">
    <source>
        <dbReference type="SAM" id="MobiDB-lite"/>
    </source>
</evidence>
<feature type="chain" id="PRO_0000311165" description="RNA-directed RNA polymerase catalytic subunit">
    <location>
        <begin position="1"/>
        <end position="757"/>
    </location>
</feature>
<feature type="domain" description="RdRp catalytic" evidence="1">
    <location>
        <begin position="286"/>
        <end position="483"/>
    </location>
</feature>
<feature type="region of interest" description="Disordered" evidence="2">
    <location>
        <begin position="50"/>
        <end position="81"/>
    </location>
</feature>
<feature type="region of interest" description="Promoter-binding site" evidence="1">
    <location>
        <begin position="249"/>
        <end position="256"/>
    </location>
</feature>
<feature type="short sequence motif" description="Nuclear localization signal" evidence="1">
    <location>
        <begin position="187"/>
        <end position="195"/>
    </location>
</feature>
<feature type="short sequence motif" description="Nuclear localization signal" evidence="1">
    <location>
        <begin position="203"/>
        <end position="216"/>
    </location>
</feature>
<feature type="compositionally biased region" description="Polar residues" evidence="2">
    <location>
        <begin position="55"/>
        <end position="64"/>
    </location>
</feature>
<reference key="1">
    <citation type="journal article" date="2004" name="Nature">
        <title>Genesis of a highly pathogenic and potentially pandemic H5N1 influenza virus in eastern Asia.</title>
        <authorList>
            <person name="Li K.S."/>
            <person name="Guan Y."/>
            <person name="Wang J."/>
            <person name="Smith G.J.D."/>
            <person name="Xu K.M."/>
            <person name="Duan L."/>
            <person name="Rahardjo A.P."/>
            <person name="Puthavathana P."/>
            <person name="Buranathai C."/>
            <person name="Nguyen T.D."/>
            <person name="Estoepangestie A.T.S."/>
            <person name="Chaisingh A."/>
            <person name="Auewarakul P."/>
            <person name="Long H.T."/>
            <person name="Hanh N.T.H."/>
            <person name="Webby R.J."/>
            <person name="Poon L.L.M."/>
            <person name="Chen H."/>
            <person name="Shortridge K.F."/>
            <person name="Yuen K.Y."/>
            <person name="Webster R.G."/>
            <person name="Peiris J.S.M."/>
        </authorList>
    </citation>
    <scope>NUCLEOTIDE SEQUENCE [GENOMIC RNA]</scope>
</reference>
<reference key="2">
    <citation type="submission" date="2008-03" db="EMBL/GenBank/DDBJ databases">
        <authorList>
            <person name="Li K.S."/>
            <person name="Guan Y."/>
            <person name="Wang J."/>
            <person name="Smith G.J.D."/>
            <person name="Xu K.M."/>
            <person name="Duan L."/>
            <person name="Rahardjo A.P."/>
            <person name="Puthavathana P."/>
            <person name="Buranathai C."/>
            <person name="Nguyen T.D."/>
            <person name="Estoepangestie A.T.S."/>
            <person name="Chaisingh A."/>
            <person name="Auewarakul P."/>
            <person name="Long H.T."/>
            <person name="Hanh N.T.H."/>
            <person name="Lim W."/>
            <person name="Webby R.J."/>
            <person name="Poon L.L.M."/>
            <person name="Chen H."/>
            <person name="Shortridge K.F."/>
            <person name="Yuen K.Y."/>
            <person name="Webster R.G."/>
            <person name="Peiris J.S.M."/>
        </authorList>
    </citation>
    <scope>SEQUENCE REVISION</scope>
</reference>
<name>RDRP_I02A3</name>
<keyword id="KW-1262">Eukaryotic host gene expression shutoff by virus</keyword>
<keyword id="KW-1191">Eukaryotic host transcription shutoff by virus</keyword>
<keyword id="KW-1035">Host cytoplasm</keyword>
<keyword id="KW-1190">Host gene expression shutoff by virus</keyword>
<keyword id="KW-1048">Host nucleus</keyword>
<keyword id="KW-0945">Host-virus interaction</keyword>
<keyword id="KW-1104">Inhibition of host RNA polymerase II by virus</keyword>
<keyword id="KW-0547">Nucleotide-binding</keyword>
<keyword id="KW-0548">Nucleotidyltransferase</keyword>
<keyword id="KW-0597">Phosphoprotein</keyword>
<keyword id="KW-0696">RNA-directed RNA polymerase</keyword>
<keyword id="KW-0808">Transferase</keyword>
<keyword id="KW-0693">Viral RNA replication</keyword>
<keyword id="KW-1195">Viral transcription</keyword>
<organismHost>
    <name type="scientific">Aves</name>
    <dbReference type="NCBI Taxonomy" id="8782"/>
</organismHost>
<organismHost>
    <name type="scientific">Felis catus</name>
    <name type="common">Cat</name>
    <name type="synonym">Felis silvestris catus</name>
    <dbReference type="NCBI Taxonomy" id="9685"/>
</organismHost>
<organismHost>
    <name type="scientific">Homo sapiens</name>
    <name type="common">Human</name>
    <dbReference type="NCBI Taxonomy" id="9606"/>
</organismHost>
<organismHost>
    <name type="scientific">Panthera pardus</name>
    <name type="common">Leopard</name>
    <name type="synonym">Felis pardus</name>
    <dbReference type="NCBI Taxonomy" id="9691"/>
</organismHost>
<organismHost>
    <name type="scientific">Panthera tigris</name>
    <name type="common">Tiger</name>
    <dbReference type="NCBI Taxonomy" id="9694"/>
</organismHost>
<organismHost>
    <name type="scientific">Sus scrofa</name>
    <name type="common">Pig</name>
    <dbReference type="NCBI Taxonomy" id="9823"/>
</organismHost>
<protein>
    <recommendedName>
        <fullName evidence="1">RNA-directed RNA polymerase catalytic subunit</fullName>
        <ecNumber evidence="1">2.7.7.48</ecNumber>
    </recommendedName>
    <alternativeName>
        <fullName evidence="1">Polymerase basic protein 1</fullName>
        <shortName evidence="1">PB1</shortName>
    </alternativeName>
    <alternativeName>
        <fullName evidence="1">RNA-directed RNA polymerase subunit P1</fullName>
    </alternativeName>
</protein>
<organism>
    <name type="scientific">Influenza A virus (strain A/Chicken/Hong Kong/37.4/2002 H5N1 genotype X2)</name>
    <dbReference type="NCBI Taxonomy" id="284172"/>
    <lineage>
        <taxon>Viruses</taxon>
        <taxon>Riboviria</taxon>
        <taxon>Orthornavirae</taxon>
        <taxon>Negarnaviricota</taxon>
        <taxon>Polyploviricotina</taxon>
        <taxon>Insthoviricetes</taxon>
        <taxon>Articulavirales</taxon>
        <taxon>Orthomyxoviridae</taxon>
        <taxon>Alphainfluenzavirus</taxon>
        <taxon>Alphainfluenzavirus influenzae</taxon>
        <taxon>Influenza A virus</taxon>
    </lineage>
</organism>
<sequence length="757" mass="86505">MDVNPTLLFLKVPAQNAISTTFPYTGDPPYSHGTGTGYTMDTVNRTHQYSEKGKWTTNTETGAPQLNPIDGPLPENHEPSGYAQTDCVLEAMAFLEESHPGIFENSCLETMEVVQQTRVDKLTQGRQTYDWTLNRNQPAATALANTIEVFRSNDLTANESGRLIDFLKDVMESMDKEEMEITTHFQRKRRIRDNMTKKMVTQRTIGKKKQRLNKKSYLIRALTLNTMTKDAERGKLKRRAIATPGMQIRGFVYFVETLARSICEKLEQSGLPVGGNEKKAKLANVVRKMMTNSQDTELSFTITGDNTKWNENQNPRMFLAMITYITRNQPDWFRNVLSIAPIMFSNKMARLGKGYMFESKSMKLRTQIPAEMLANIDLKYFNESTRKKIEKIRPLLIDGTASLSPGMMMGMFNMLSTVLGVSILNLGQKRYTKTTYWWDGLQSSDDFALIVNAPNHEGIQAGVDRFYRTCKLVGINMSKKKSYINRTGTFEFTSFFYRYGFVANFSMELPSFGVSGINESADMSIGVTVIKNNMINNDLGPATAQMALQLFIKDYRYTYRCHRGDTQIQTRRSFELKKLWEQTRSKAGLLVSDGGPNLYNIRNLHIPEVCLKWELMDEDYQGRLCNPLNPFVSHKEIESVNNAVVMPAHGPAKSMEYDAVATTHSWIPKRNRSILNTSQRGILEDEQMYQKCCNLFEKFFPSSSYRRPVGISSMVEAMVSRARIDARIDFESGRIKKEEFAEIMKICSTIEELRRQK</sequence>
<dbReference type="EC" id="2.7.7.48" evidence="1"/>
<dbReference type="EMBL" id="AY651678">
    <property type="protein sequence ID" value="AAT73509.2"/>
    <property type="molecule type" value="Genomic_RNA"/>
</dbReference>
<dbReference type="SMR" id="Q6DNS4"/>
<dbReference type="GO" id="GO:0030430">
    <property type="term" value="C:host cell cytoplasm"/>
    <property type="evidence" value="ECO:0007669"/>
    <property type="project" value="UniProtKB-SubCell"/>
</dbReference>
<dbReference type="GO" id="GO:0042025">
    <property type="term" value="C:host cell nucleus"/>
    <property type="evidence" value="ECO:0007669"/>
    <property type="project" value="UniProtKB-SubCell"/>
</dbReference>
<dbReference type="GO" id="GO:0000166">
    <property type="term" value="F:nucleotide binding"/>
    <property type="evidence" value="ECO:0007669"/>
    <property type="project" value="UniProtKB-UniRule"/>
</dbReference>
<dbReference type="GO" id="GO:0003723">
    <property type="term" value="F:RNA binding"/>
    <property type="evidence" value="ECO:0007669"/>
    <property type="project" value="InterPro"/>
</dbReference>
<dbReference type="GO" id="GO:0003968">
    <property type="term" value="F:RNA-directed RNA polymerase activity"/>
    <property type="evidence" value="ECO:0007669"/>
    <property type="project" value="UniProtKB-UniRule"/>
</dbReference>
<dbReference type="GO" id="GO:0006351">
    <property type="term" value="P:DNA-templated transcription"/>
    <property type="evidence" value="ECO:0007669"/>
    <property type="project" value="UniProtKB-UniRule"/>
</dbReference>
<dbReference type="GO" id="GO:0039657">
    <property type="term" value="P:symbiont-mediated suppression of host gene expression"/>
    <property type="evidence" value="ECO:0007669"/>
    <property type="project" value="UniProtKB-KW"/>
</dbReference>
<dbReference type="GO" id="GO:0039523">
    <property type="term" value="P:symbiont-mediated suppression of host mRNA transcription via inhibition of RNA polymerase II activity"/>
    <property type="evidence" value="ECO:0007669"/>
    <property type="project" value="UniProtKB-UniRule"/>
</dbReference>
<dbReference type="GO" id="GO:0039694">
    <property type="term" value="P:viral RNA genome replication"/>
    <property type="evidence" value="ECO:0007669"/>
    <property type="project" value="UniProtKB-UniRule"/>
</dbReference>
<dbReference type="GO" id="GO:0019083">
    <property type="term" value="P:viral transcription"/>
    <property type="evidence" value="ECO:0007669"/>
    <property type="project" value="UniProtKB-KW"/>
</dbReference>
<dbReference type="Gene3D" id="6.10.140.720">
    <property type="match status" value="1"/>
</dbReference>
<dbReference type="HAMAP" id="MF_04065">
    <property type="entry name" value="INFV_RDRP"/>
    <property type="match status" value="1"/>
</dbReference>
<dbReference type="InterPro" id="IPR007099">
    <property type="entry name" value="RNA-dir_pol_NSvirus"/>
</dbReference>
<dbReference type="InterPro" id="IPR001407">
    <property type="entry name" value="RNA_pol_PB1_influenza"/>
</dbReference>
<dbReference type="Pfam" id="PF00602">
    <property type="entry name" value="Flu_PB1"/>
    <property type="match status" value="1"/>
</dbReference>
<dbReference type="PIRSF" id="PIRSF000827">
    <property type="entry name" value="RdRPol_OMV"/>
    <property type="match status" value="1"/>
</dbReference>
<dbReference type="PROSITE" id="PS50525">
    <property type="entry name" value="RDRP_SSRNA_NEG_SEG"/>
    <property type="match status" value="1"/>
</dbReference>
<proteinExistence type="inferred from homology"/>
<accession>Q6DNS4</accession>
<gene>
    <name evidence="1" type="primary">PB1</name>
</gene>
<comment type="function">
    <text evidence="1">RNA-dependent RNA polymerase which is responsible for replication and transcription of virus RNA segments. The transcription of viral mRNAs occurs by a unique mechanism called cap-snatching. 5' methylated caps of cellular mRNAs are cleaved after 10-13 nucleotides by PA. In turn, these short capped RNAs are used as primers by PB1 for transcription of viral mRNAs. During virus replication, PB1 initiates RNA synthesis and copy vRNA into complementary RNA (cRNA) which in turn serves as a template for the production of more vRNAs.</text>
</comment>
<comment type="catalytic activity">
    <reaction evidence="1">
        <text>RNA(n) + a ribonucleoside 5'-triphosphate = RNA(n+1) + diphosphate</text>
        <dbReference type="Rhea" id="RHEA:21248"/>
        <dbReference type="Rhea" id="RHEA-COMP:14527"/>
        <dbReference type="Rhea" id="RHEA-COMP:17342"/>
        <dbReference type="ChEBI" id="CHEBI:33019"/>
        <dbReference type="ChEBI" id="CHEBI:61557"/>
        <dbReference type="ChEBI" id="CHEBI:140395"/>
        <dbReference type="EC" id="2.7.7.48"/>
    </reaction>
</comment>
<comment type="subunit">
    <text evidence="1">Influenza RNA polymerase is composed of three subunits: PB1, PB2 and PA. Interacts (via N-terminus) with PA (via C-terminus). Interacts (via C-terminus) with PB2 (via N-terminus); this interaction is essential for transcription initiation.</text>
</comment>
<comment type="subcellular location">
    <subcellularLocation>
        <location evidence="1">Host nucleus</location>
    </subcellularLocation>
    <subcellularLocation>
        <location evidence="1">Host cytoplasm</location>
    </subcellularLocation>
</comment>
<comment type="PTM">
    <text evidence="1">Phosphorylated by host PRKCA.</text>
</comment>
<comment type="similarity">
    <text evidence="1">Belongs to the influenza viruses polymerase PB1 family.</text>
</comment>